<dbReference type="EMBL" id="DQ898156">
    <property type="protein sequence ID" value="ABI32457.1"/>
    <property type="molecule type" value="Genomic_DNA"/>
</dbReference>
<dbReference type="RefSeq" id="YP_740151.1">
    <property type="nucleotide sequence ID" value="NC_008325.1"/>
</dbReference>
<dbReference type="SMR" id="Q0G9S8"/>
<dbReference type="GeneID" id="4266778"/>
<dbReference type="GO" id="GO:0009507">
    <property type="term" value="C:chloroplast"/>
    <property type="evidence" value="ECO:0007669"/>
    <property type="project" value="UniProtKB-SubCell"/>
</dbReference>
<dbReference type="GO" id="GO:1990904">
    <property type="term" value="C:ribonucleoprotein complex"/>
    <property type="evidence" value="ECO:0007669"/>
    <property type="project" value="UniProtKB-KW"/>
</dbReference>
<dbReference type="GO" id="GO:0005840">
    <property type="term" value="C:ribosome"/>
    <property type="evidence" value="ECO:0007669"/>
    <property type="project" value="UniProtKB-KW"/>
</dbReference>
<dbReference type="GO" id="GO:0003735">
    <property type="term" value="F:structural constituent of ribosome"/>
    <property type="evidence" value="ECO:0007669"/>
    <property type="project" value="InterPro"/>
</dbReference>
<dbReference type="GO" id="GO:0006412">
    <property type="term" value="P:translation"/>
    <property type="evidence" value="ECO:0007669"/>
    <property type="project" value="UniProtKB-UniRule"/>
</dbReference>
<dbReference type="HAMAP" id="MF_00251">
    <property type="entry name" value="Ribosomal_bL36"/>
    <property type="match status" value="1"/>
</dbReference>
<dbReference type="InterPro" id="IPR000473">
    <property type="entry name" value="Ribosomal_bL36"/>
</dbReference>
<dbReference type="InterPro" id="IPR035977">
    <property type="entry name" value="Ribosomal_bL36_sp"/>
</dbReference>
<dbReference type="NCBIfam" id="TIGR01022">
    <property type="entry name" value="rpmJ_bact"/>
    <property type="match status" value="1"/>
</dbReference>
<dbReference type="PANTHER" id="PTHR42888">
    <property type="entry name" value="50S RIBOSOMAL PROTEIN L36, CHLOROPLASTIC"/>
    <property type="match status" value="1"/>
</dbReference>
<dbReference type="PANTHER" id="PTHR42888:SF1">
    <property type="entry name" value="LARGE RIBOSOMAL SUBUNIT PROTEIN BL36C"/>
    <property type="match status" value="1"/>
</dbReference>
<dbReference type="Pfam" id="PF00444">
    <property type="entry name" value="Ribosomal_L36"/>
    <property type="match status" value="1"/>
</dbReference>
<dbReference type="SUPFAM" id="SSF57840">
    <property type="entry name" value="Ribosomal protein L36"/>
    <property type="match status" value="1"/>
</dbReference>
<dbReference type="PROSITE" id="PS00828">
    <property type="entry name" value="RIBOSOMAL_L36"/>
    <property type="match status" value="1"/>
</dbReference>
<geneLocation type="chloroplast"/>
<gene>
    <name evidence="1" type="primary">rpl36</name>
</gene>
<accession>Q0G9S8</accession>
<feature type="chain" id="PRO_0000276814" description="Large ribosomal subunit protein bL36c">
    <location>
        <begin position="1"/>
        <end position="37"/>
    </location>
</feature>
<proteinExistence type="inferred from homology"/>
<comment type="subcellular location">
    <subcellularLocation>
        <location>Plastid</location>
        <location>Chloroplast</location>
    </subcellularLocation>
</comment>
<comment type="similarity">
    <text evidence="1">Belongs to the bacterial ribosomal protein bL36 family.</text>
</comment>
<name>RK36_DAUCA</name>
<reference key="1">
    <citation type="journal article" date="2006" name="BMC Genomics">
        <title>Complete plastid genome sequence of Daucus carota: implications for biotechnology and phylogeny of angiosperms.</title>
        <authorList>
            <person name="Ruhlman T."/>
            <person name="Lee S.-B."/>
            <person name="Jansen R.K."/>
            <person name="Hostetler J.B."/>
            <person name="Tallon L.J."/>
            <person name="Town C.D."/>
            <person name="Daniell H."/>
        </authorList>
    </citation>
    <scope>NUCLEOTIDE SEQUENCE [LARGE SCALE GENOMIC DNA]</scope>
    <source>
        <strain>cv. Danvers Half-long</strain>
    </source>
</reference>
<protein>
    <recommendedName>
        <fullName evidence="1">Large ribosomal subunit protein bL36c</fullName>
    </recommendedName>
    <alternativeName>
        <fullName evidence="2">50S ribosomal protein L36, chloroplastic</fullName>
    </alternativeName>
</protein>
<organism>
    <name type="scientific">Daucus carota</name>
    <name type="common">Wild carrot</name>
    <dbReference type="NCBI Taxonomy" id="4039"/>
    <lineage>
        <taxon>Eukaryota</taxon>
        <taxon>Viridiplantae</taxon>
        <taxon>Streptophyta</taxon>
        <taxon>Embryophyta</taxon>
        <taxon>Tracheophyta</taxon>
        <taxon>Spermatophyta</taxon>
        <taxon>Magnoliopsida</taxon>
        <taxon>eudicotyledons</taxon>
        <taxon>Gunneridae</taxon>
        <taxon>Pentapetalae</taxon>
        <taxon>asterids</taxon>
        <taxon>campanulids</taxon>
        <taxon>Apiales</taxon>
        <taxon>Apiaceae</taxon>
        <taxon>Apioideae</taxon>
        <taxon>Scandiceae</taxon>
        <taxon>Daucinae</taxon>
        <taxon>Daucus</taxon>
        <taxon>Daucus sect. Daucus</taxon>
    </lineage>
</organism>
<evidence type="ECO:0000255" key="1">
    <source>
        <dbReference type="HAMAP-Rule" id="MF_00251"/>
    </source>
</evidence>
<evidence type="ECO:0000305" key="2"/>
<sequence length="37" mass="4460">MKIRASVRKICEKCRLIRRRGRIIVICSNPRHKQRQG</sequence>
<keyword id="KW-0150">Chloroplast</keyword>
<keyword id="KW-0934">Plastid</keyword>
<keyword id="KW-0687">Ribonucleoprotein</keyword>
<keyword id="KW-0689">Ribosomal protein</keyword>